<proteinExistence type="inferred from homology"/>
<evidence type="ECO:0000255" key="1">
    <source>
        <dbReference type="HAMAP-Rule" id="MF_00625"/>
    </source>
</evidence>
<comment type="function">
    <text evidence="1">Synthesizes selenophosphate from selenide and ATP.</text>
</comment>
<comment type="catalytic activity">
    <reaction evidence="1">
        <text>hydrogenselenide + ATP + H2O = selenophosphate + AMP + phosphate + 2 H(+)</text>
        <dbReference type="Rhea" id="RHEA:18737"/>
        <dbReference type="ChEBI" id="CHEBI:15377"/>
        <dbReference type="ChEBI" id="CHEBI:15378"/>
        <dbReference type="ChEBI" id="CHEBI:16144"/>
        <dbReference type="ChEBI" id="CHEBI:29317"/>
        <dbReference type="ChEBI" id="CHEBI:30616"/>
        <dbReference type="ChEBI" id="CHEBI:43474"/>
        <dbReference type="ChEBI" id="CHEBI:456215"/>
        <dbReference type="EC" id="2.7.9.3"/>
    </reaction>
</comment>
<comment type="cofactor">
    <cofactor evidence="1">
        <name>Mg(2+)</name>
        <dbReference type="ChEBI" id="CHEBI:18420"/>
    </cofactor>
    <text evidence="1">Binds 1 Mg(2+) ion per monomer.</text>
</comment>
<comment type="subunit">
    <text evidence="1">Homodimer.</text>
</comment>
<comment type="similarity">
    <text evidence="1">Belongs to the selenophosphate synthase 1 family. Class I subfamily.</text>
</comment>
<protein>
    <recommendedName>
        <fullName evidence="1">Selenide, water dikinase</fullName>
        <ecNumber evidence="1">2.7.9.3</ecNumber>
    </recommendedName>
    <alternativeName>
        <fullName evidence="1">Selenium donor protein</fullName>
    </alternativeName>
    <alternativeName>
        <fullName evidence="1">Selenophosphate synthase</fullName>
    </alternativeName>
</protein>
<organism>
    <name type="scientific">Nitrosomonas eutropha (strain DSM 101675 / C91 / Nm57)</name>
    <dbReference type="NCBI Taxonomy" id="335283"/>
    <lineage>
        <taxon>Bacteria</taxon>
        <taxon>Pseudomonadati</taxon>
        <taxon>Pseudomonadota</taxon>
        <taxon>Betaproteobacteria</taxon>
        <taxon>Nitrosomonadales</taxon>
        <taxon>Nitrosomonadaceae</taxon>
        <taxon>Nitrosomonas</taxon>
    </lineage>
</organism>
<dbReference type="EC" id="2.7.9.3" evidence="1"/>
<dbReference type="EMBL" id="CP000450">
    <property type="protein sequence ID" value="ABI59896.1"/>
    <property type="molecule type" value="Genomic_DNA"/>
</dbReference>
<dbReference type="RefSeq" id="WP_011634702.1">
    <property type="nucleotide sequence ID" value="NC_008344.1"/>
</dbReference>
<dbReference type="SMR" id="Q0AFI6"/>
<dbReference type="STRING" id="335283.Neut_1654"/>
<dbReference type="KEGG" id="net:Neut_1654"/>
<dbReference type="eggNOG" id="COG0709">
    <property type="taxonomic scope" value="Bacteria"/>
</dbReference>
<dbReference type="HOGENOM" id="CLU_032859_0_1_4"/>
<dbReference type="OrthoDB" id="9767928at2"/>
<dbReference type="Proteomes" id="UP000001966">
    <property type="component" value="Chromosome"/>
</dbReference>
<dbReference type="GO" id="GO:0005737">
    <property type="term" value="C:cytoplasm"/>
    <property type="evidence" value="ECO:0007669"/>
    <property type="project" value="TreeGrafter"/>
</dbReference>
<dbReference type="GO" id="GO:0005524">
    <property type="term" value="F:ATP binding"/>
    <property type="evidence" value="ECO:0007669"/>
    <property type="project" value="UniProtKB-UniRule"/>
</dbReference>
<dbReference type="GO" id="GO:0000287">
    <property type="term" value="F:magnesium ion binding"/>
    <property type="evidence" value="ECO:0007669"/>
    <property type="project" value="UniProtKB-UniRule"/>
</dbReference>
<dbReference type="GO" id="GO:0004756">
    <property type="term" value="F:selenide, water dikinase activity"/>
    <property type="evidence" value="ECO:0007669"/>
    <property type="project" value="UniProtKB-UniRule"/>
</dbReference>
<dbReference type="GO" id="GO:0016260">
    <property type="term" value="P:selenocysteine biosynthetic process"/>
    <property type="evidence" value="ECO:0007669"/>
    <property type="project" value="InterPro"/>
</dbReference>
<dbReference type="CDD" id="cd02195">
    <property type="entry name" value="SelD"/>
    <property type="match status" value="1"/>
</dbReference>
<dbReference type="FunFam" id="3.30.1330.10:FF:000003">
    <property type="entry name" value="Selenide, water dikinase"/>
    <property type="match status" value="1"/>
</dbReference>
<dbReference type="Gene3D" id="3.90.650.10">
    <property type="entry name" value="PurM-like C-terminal domain"/>
    <property type="match status" value="1"/>
</dbReference>
<dbReference type="Gene3D" id="3.30.1330.10">
    <property type="entry name" value="PurM-like, N-terminal domain"/>
    <property type="match status" value="1"/>
</dbReference>
<dbReference type="HAMAP" id="MF_00625">
    <property type="entry name" value="SelD"/>
    <property type="match status" value="1"/>
</dbReference>
<dbReference type="InterPro" id="IPR010918">
    <property type="entry name" value="PurM-like_C_dom"/>
</dbReference>
<dbReference type="InterPro" id="IPR036676">
    <property type="entry name" value="PurM-like_C_sf"/>
</dbReference>
<dbReference type="InterPro" id="IPR016188">
    <property type="entry name" value="PurM-like_N"/>
</dbReference>
<dbReference type="InterPro" id="IPR036921">
    <property type="entry name" value="PurM-like_N_sf"/>
</dbReference>
<dbReference type="InterPro" id="IPR023061">
    <property type="entry name" value="SelD_I"/>
</dbReference>
<dbReference type="InterPro" id="IPR004536">
    <property type="entry name" value="SPS/SelD"/>
</dbReference>
<dbReference type="NCBIfam" id="NF002098">
    <property type="entry name" value="PRK00943.1"/>
    <property type="match status" value="1"/>
</dbReference>
<dbReference type="NCBIfam" id="TIGR00476">
    <property type="entry name" value="selD"/>
    <property type="match status" value="1"/>
</dbReference>
<dbReference type="PANTHER" id="PTHR10256:SF0">
    <property type="entry name" value="INACTIVE SELENIDE, WATER DIKINASE-LIKE PROTEIN-RELATED"/>
    <property type="match status" value="1"/>
</dbReference>
<dbReference type="PANTHER" id="PTHR10256">
    <property type="entry name" value="SELENIDE, WATER DIKINASE"/>
    <property type="match status" value="1"/>
</dbReference>
<dbReference type="Pfam" id="PF00586">
    <property type="entry name" value="AIRS"/>
    <property type="match status" value="1"/>
</dbReference>
<dbReference type="Pfam" id="PF02769">
    <property type="entry name" value="AIRS_C"/>
    <property type="match status" value="1"/>
</dbReference>
<dbReference type="PIRSF" id="PIRSF036407">
    <property type="entry name" value="Selenphspht_syn"/>
    <property type="match status" value="1"/>
</dbReference>
<dbReference type="SUPFAM" id="SSF56042">
    <property type="entry name" value="PurM C-terminal domain-like"/>
    <property type="match status" value="1"/>
</dbReference>
<dbReference type="SUPFAM" id="SSF55326">
    <property type="entry name" value="PurM N-terminal domain-like"/>
    <property type="match status" value="1"/>
</dbReference>
<reference key="1">
    <citation type="journal article" date="2007" name="Environ. Microbiol.">
        <title>Whole-genome analysis of the ammonia-oxidizing bacterium, Nitrosomonas eutropha C91: implications for niche adaptation.</title>
        <authorList>
            <person name="Stein L.Y."/>
            <person name="Arp D.J."/>
            <person name="Berube P.M."/>
            <person name="Chain P.S."/>
            <person name="Hauser L."/>
            <person name="Jetten M.S."/>
            <person name="Klotz M.G."/>
            <person name="Larimer F.W."/>
            <person name="Norton J.M."/>
            <person name="Op den Camp H.J.M."/>
            <person name="Shin M."/>
            <person name="Wei X."/>
        </authorList>
    </citation>
    <scope>NUCLEOTIDE SEQUENCE [LARGE SCALE GENOMIC DNA]</scope>
    <source>
        <strain>DSM 101675 / C91 / Nm57</strain>
    </source>
</reference>
<keyword id="KW-0067">ATP-binding</keyword>
<keyword id="KW-0418">Kinase</keyword>
<keyword id="KW-0460">Magnesium</keyword>
<keyword id="KW-0479">Metal-binding</keyword>
<keyword id="KW-0547">Nucleotide-binding</keyword>
<keyword id="KW-0711">Selenium</keyword>
<keyword id="KW-0808">Transferase</keyword>
<sequence length="349" mass="37391">MHPEKIALTQTVQKGGCAAKVAATTLHRILQQVRFPAAHSALMVDGRYFDDAAIYKINEQTALVQTLDFFTPIVDTPRLFGEIAAANAISDVYAMGGRPVTAMGILAFPLATLSEHIIVDVLQGASDKIAEAGANFVGGHSIDDDTLKFGLSVTGLVNPQQVWTNANAQSGDHLVLTKALGTGTLTAGIKRQQLQEKDIMDALESMAAINNVIDYLSPDLLAAIHAATDITGFGFSGHAMQLANASNVTLSIATGNLPRFDKAFYCLKNSFLTKAHRTNAEYTTPHIDDAKLDALYKLLIHDPQTSGGLLLSVVPEASQLVLQALRTYFKPAAIVGTVHPRQDKAVQFE</sequence>
<feature type="chain" id="PRO_1000051599" description="Selenide, water dikinase">
    <location>
        <begin position="1"/>
        <end position="349"/>
    </location>
</feature>
<feature type="active site" evidence="1">
    <location>
        <position position="17"/>
    </location>
</feature>
<feature type="binding site" description="in other chain" evidence="1">
    <location>
        <position position="20"/>
    </location>
    <ligand>
        <name>ATP</name>
        <dbReference type="ChEBI" id="CHEBI:30616"/>
        <note>ligand shared between dimeric partners</note>
    </ligand>
</feature>
<feature type="binding site" description="in other chain" evidence="1">
    <location>
        <begin position="48"/>
        <end position="50"/>
    </location>
    <ligand>
        <name>ATP</name>
        <dbReference type="ChEBI" id="CHEBI:30616"/>
        <note>ligand shared between dimeric partners</note>
    </ligand>
</feature>
<feature type="binding site" evidence="1">
    <location>
        <position position="51"/>
    </location>
    <ligand>
        <name>Mg(2+)</name>
        <dbReference type="ChEBI" id="CHEBI:18420"/>
    </ligand>
</feature>
<feature type="binding site" description="in other chain" evidence="1">
    <location>
        <position position="68"/>
    </location>
    <ligand>
        <name>ATP</name>
        <dbReference type="ChEBI" id="CHEBI:30616"/>
        <note>ligand shared between dimeric partners</note>
    </ligand>
</feature>
<feature type="binding site" description="in other chain" evidence="1">
    <location>
        <position position="91"/>
    </location>
    <ligand>
        <name>ATP</name>
        <dbReference type="ChEBI" id="CHEBI:30616"/>
        <note>ligand shared between dimeric partners</note>
    </ligand>
</feature>
<feature type="binding site" evidence="1">
    <location>
        <position position="91"/>
    </location>
    <ligand>
        <name>Mg(2+)</name>
        <dbReference type="ChEBI" id="CHEBI:18420"/>
    </ligand>
</feature>
<feature type="binding site" evidence="1">
    <location>
        <begin position="139"/>
        <end position="141"/>
    </location>
    <ligand>
        <name>ATP</name>
        <dbReference type="ChEBI" id="CHEBI:30616"/>
        <note>ligand shared between dimeric partners</note>
    </ligand>
</feature>
<feature type="binding site" evidence="1">
    <location>
        <position position="229"/>
    </location>
    <ligand>
        <name>Mg(2+)</name>
        <dbReference type="ChEBI" id="CHEBI:18420"/>
    </ligand>
</feature>
<feature type="site" description="Important for catalytic activity" evidence="1">
    <location>
        <position position="20"/>
    </location>
</feature>
<name>SELD_NITEC</name>
<gene>
    <name evidence="1" type="primary">selD</name>
    <name type="ordered locus">Neut_1654</name>
</gene>
<accession>Q0AFI6</accession>